<protein>
    <recommendedName>
        <fullName evidence="1">4-diphosphocytidyl-2-C-methyl-D-erythritol kinase</fullName>
        <shortName evidence="1">CMK</shortName>
        <ecNumber evidence="1">2.7.1.148</ecNumber>
    </recommendedName>
    <alternativeName>
        <fullName evidence="1">4-(cytidine-5'-diphospho)-2-C-methyl-D-erythritol kinase</fullName>
    </alternativeName>
</protein>
<reference key="1">
    <citation type="journal article" date="2004" name="Nature">
        <title>Genome sequence of Silicibacter pomeroyi reveals adaptations to the marine environment.</title>
        <authorList>
            <person name="Moran M.A."/>
            <person name="Buchan A."/>
            <person name="Gonzalez J.M."/>
            <person name="Heidelberg J.F."/>
            <person name="Whitman W.B."/>
            <person name="Kiene R.P."/>
            <person name="Henriksen J.R."/>
            <person name="King G.M."/>
            <person name="Belas R."/>
            <person name="Fuqua C."/>
            <person name="Brinkac L.M."/>
            <person name="Lewis M."/>
            <person name="Johri S."/>
            <person name="Weaver B."/>
            <person name="Pai G."/>
            <person name="Eisen J.A."/>
            <person name="Rahe E."/>
            <person name="Sheldon W.M."/>
            <person name="Ye W."/>
            <person name="Miller T.R."/>
            <person name="Carlton J."/>
            <person name="Rasko D.A."/>
            <person name="Paulsen I.T."/>
            <person name="Ren Q."/>
            <person name="Daugherty S.C."/>
            <person name="DeBoy R.T."/>
            <person name="Dodson R.J."/>
            <person name="Durkin A.S."/>
            <person name="Madupu R."/>
            <person name="Nelson W.C."/>
            <person name="Sullivan S.A."/>
            <person name="Rosovitz M.J."/>
            <person name="Haft D.H."/>
            <person name="Selengut J."/>
            <person name="Ward N."/>
        </authorList>
    </citation>
    <scope>NUCLEOTIDE SEQUENCE [LARGE SCALE GENOMIC DNA]</scope>
    <source>
        <strain>ATCC 700808 / DSM 15171 / DSS-3</strain>
    </source>
</reference>
<reference key="2">
    <citation type="journal article" date="2014" name="Stand. Genomic Sci.">
        <title>An updated genome annotation for the model marine bacterium Ruegeria pomeroyi DSS-3.</title>
        <authorList>
            <person name="Rivers A.R."/>
            <person name="Smith C.B."/>
            <person name="Moran M.A."/>
        </authorList>
    </citation>
    <scope>GENOME REANNOTATION</scope>
    <source>
        <strain>ATCC 700808 / DSM 15171 / DSS-3</strain>
    </source>
</reference>
<organism>
    <name type="scientific">Ruegeria pomeroyi (strain ATCC 700808 / DSM 15171 / DSS-3)</name>
    <name type="common">Silicibacter pomeroyi</name>
    <dbReference type="NCBI Taxonomy" id="246200"/>
    <lineage>
        <taxon>Bacteria</taxon>
        <taxon>Pseudomonadati</taxon>
        <taxon>Pseudomonadota</taxon>
        <taxon>Alphaproteobacteria</taxon>
        <taxon>Rhodobacterales</taxon>
        <taxon>Roseobacteraceae</taxon>
        <taxon>Ruegeria</taxon>
    </lineage>
</organism>
<evidence type="ECO:0000255" key="1">
    <source>
        <dbReference type="HAMAP-Rule" id="MF_00061"/>
    </source>
</evidence>
<name>ISPE_RUEPO</name>
<feature type="chain" id="PRO_0000235132" description="4-diphosphocytidyl-2-C-methyl-D-erythritol kinase">
    <location>
        <begin position="1"/>
        <end position="279"/>
    </location>
</feature>
<feature type="active site" evidence="1">
    <location>
        <position position="10"/>
    </location>
</feature>
<feature type="active site" evidence="1">
    <location>
        <position position="130"/>
    </location>
</feature>
<feature type="binding site" evidence="1">
    <location>
        <begin position="91"/>
        <end position="101"/>
    </location>
    <ligand>
        <name>ATP</name>
        <dbReference type="ChEBI" id="CHEBI:30616"/>
    </ligand>
</feature>
<dbReference type="EC" id="2.7.1.148" evidence="1"/>
<dbReference type="EMBL" id="CP000031">
    <property type="protein sequence ID" value="AAV93636.1"/>
    <property type="molecule type" value="Genomic_DNA"/>
</dbReference>
<dbReference type="RefSeq" id="WP_011046079.1">
    <property type="nucleotide sequence ID" value="NC_003911.12"/>
</dbReference>
<dbReference type="SMR" id="Q5LX98"/>
<dbReference type="STRING" id="246200.SPO0318"/>
<dbReference type="PaxDb" id="246200-SPO0318"/>
<dbReference type="KEGG" id="sil:SPO0318"/>
<dbReference type="eggNOG" id="COG1947">
    <property type="taxonomic scope" value="Bacteria"/>
</dbReference>
<dbReference type="HOGENOM" id="CLU_053057_1_0_5"/>
<dbReference type="OrthoDB" id="9809438at2"/>
<dbReference type="UniPathway" id="UPA00056">
    <property type="reaction ID" value="UER00094"/>
</dbReference>
<dbReference type="Proteomes" id="UP000001023">
    <property type="component" value="Chromosome"/>
</dbReference>
<dbReference type="GO" id="GO:0050515">
    <property type="term" value="F:4-(cytidine 5'-diphospho)-2-C-methyl-D-erythritol kinase activity"/>
    <property type="evidence" value="ECO:0007669"/>
    <property type="project" value="UniProtKB-UniRule"/>
</dbReference>
<dbReference type="GO" id="GO:0005524">
    <property type="term" value="F:ATP binding"/>
    <property type="evidence" value="ECO:0007669"/>
    <property type="project" value="UniProtKB-UniRule"/>
</dbReference>
<dbReference type="GO" id="GO:0019288">
    <property type="term" value="P:isopentenyl diphosphate biosynthetic process, methylerythritol 4-phosphate pathway"/>
    <property type="evidence" value="ECO:0007669"/>
    <property type="project" value="UniProtKB-UniRule"/>
</dbReference>
<dbReference type="GO" id="GO:0016114">
    <property type="term" value="P:terpenoid biosynthetic process"/>
    <property type="evidence" value="ECO:0007669"/>
    <property type="project" value="InterPro"/>
</dbReference>
<dbReference type="Gene3D" id="3.30.230.10">
    <property type="match status" value="1"/>
</dbReference>
<dbReference type="Gene3D" id="3.30.70.890">
    <property type="entry name" value="GHMP kinase, C-terminal domain"/>
    <property type="match status" value="1"/>
</dbReference>
<dbReference type="HAMAP" id="MF_00061">
    <property type="entry name" value="IspE"/>
    <property type="match status" value="1"/>
</dbReference>
<dbReference type="InterPro" id="IPR013750">
    <property type="entry name" value="GHMP_kinase_C_dom"/>
</dbReference>
<dbReference type="InterPro" id="IPR036554">
    <property type="entry name" value="GHMP_kinase_C_sf"/>
</dbReference>
<dbReference type="InterPro" id="IPR006204">
    <property type="entry name" value="GHMP_kinase_N_dom"/>
</dbReference>
<dbReference type="InterPro" id="IPR004424">
    <property type="entry name" value="IspE"/>
</dbReference>
<dbReference type="InterPro" id="IPR020568">
    <property type="entry name" value="Ribosomal_Su5_D2-typ_SF"/>
</dbReference>
<dbReference type="InterPro" id="IPR014721">
    <property type="entry name" value="Ribsml_uS5_D2-typ_fold_subgr"/>
</dbReference>
<dbReference type="NCBIfam" id="TIGR00154">
    <property type="entry name" value="ispE"/>
    <property type="match status" value="1"/>
</dbReference>
<dbReference type="NCBIfam" id="NF011202">
    <property type="entry name" value="PRK14608.1"/>
    <property type="match status" value="1"/>
</dbReference>
<dbReference type="PANTHER" id="PTHR43527">
    <property type="entry name" value="4-DIPHOSPHOCYTIDYL-2-C-METHYL-D-ERYTHRITOL KINASE, CHLOROPLASTIC"/>
    <property type="match status" value="1"/>
</dbReference>
<dbReference type="PANTHER" id="PTHR43527:SF2">
    <property type="entry name" value="4-DIPHOSPHOCYTIDYL-2-C-METHYL-D-ERYTHRITOL KINASE, CHLOROPLASTIC"/>
    <property type="match status" value="1"/>
</dbReference>
<dbReference type="Pfam" id="PF08544">
    <property type="entry name" value="GHMP_kinases_C"/>
    <property type="match status" value="1"/>
</dbReference>
<dbReference type="Pfam" id="PF00288">
    <property type="entry name" value="GHMP_kinases_N"/>
    <property type="match status" value="1"/>
</dbReference>
<dbReference type="PIRSF" id="PIRSF010376">
    <property type="entry name" value="IspE"/>
    <property type="match status" value="1"/>
</dbReference>
<dbReference type="SUPFAM" id="SSF55060">
    <property type="entry name" value="GHMP Kinase, C-terminal domain"/>
    <property type="match status" value="1"/>
</dbReference>
<dbReference type="SUPFAM" id="SSF54211">
    <property type="entry name" value="Ribosomal protein S5 domain 2-like"/>
    <property type="match status" value="1"/>
</dbReference>
<keyword id="KW-0067">ATP-binding</keyword>
<keyword id="KW-0414">Isoprene biosynthesis</keyword>
<keyword id="KW-0418">Kinase</keyword>
<keyword id="KW-0547">Nucleotide-binding</keyword>
<keyword id="KW-1185">Reference proteome</keyword>
<keyword id="KW-0808">Transferase</keyword>
<accession>Q5LX98</accession>
<proteinExistence type="inferred from homology"/>
<sequence>MAIEAFAPAKINLTLHVTGQRDDGYHLLDSLVVFADIGDTIRVSASDRVSLDIDGPEAGGLAAEPDNLVLRAARLLAPERGAAISLTKRLPVASGIGGGSADAAATLRALAQLWGLAAPSAEQALTLGADVPVCLFPVPARMQGIGDRLGPIPPLPAMDIVLVNPRVAVSTPAVFKSLIVKENAPMNPELPRWRDLPEFTCWLADQRNDLAEPAIAQQPVIADVLNALRDAGALFAGMSGSGATCFGLFPSDGHSAKSVAKAVLRLAHPGWWCAHGRVL</sequence>
<gene>
    <name evidence="1" type="primary">ispE</name>
    <name type="ordered locus">SPO0318</name>
</gene>
<comment type="function">
    <text evidence="1">Catalyzes the phosphorylation of the position 2 hydroxy group of 4-diphosphocytidyl-2C-methyl-D-erythritol.</text>
</comment>
<comment type="catalytic activity">
    <reaction evidence="1">
        <text>4-CDP-2-C-methyl-D-erythritol + ATP = 4-CDP-2-C-methyl-D-erythritol 2-phosphate + ADP + H(+)</text>
        <dbReference type="Rhea" id="RHEA:18437"/>
        <dbReference type="ChEBI" id="CHEBI:15378"/>
        <dbReference type="ChEBI" id="CHEBI:30616"/>
        <dbReference type="ChEBI" id="CHEBI:57823"/>
        <dbReference type="ChEBI" id="CHEBI:57919"/>
        <dbReference type="ChEBI" id="CHEBI:456216"/>
        <dbReference type="EC" id="2.7.1.148"/>
    </reaction>
</comment>
<comment type="pathway">
    <text evidence="1">Isoprenoid biosynthesis; isopentenyl diphosphate biosynthesis via DXP pathway; isopentenyl diphosphate from 1-deoxy-D-xylulose 5-phosphate: step 3/6.</text>
</comment>
<comment type="similarity">
    <text evidence="1">Belongs to the GHMP kinase family. IspE subfamily.</text>
</comment>